<proteinExistence type="inferred from homology"/>
<dbReference type="EC" id="2.3.1.117" evidence="1"/>
<dbReference type="EMBL" id="AM260525">
    <property type="protein sequence ID" value="CAK00571.1"/>
    <property type="molecule type" value="Genomic_DNA"/>
</dbReference>
<dbReference type="RefSeq" id="WP_012230384.1">
    <property type="nucleotide sequence ID" value="NC_010161.1"/>
</dbReference>
<dbReference type="SMR" id="A9ILJ3"/>
<dbReference type="KEGG" id="btr:BT_0075"/>
<dbReference type="eggNOG" id="COG2171">
    <property type="taxonomic scope" value="Bacteria"/>
</dbReference>
<dbReference type="HOGENOM" id="CLU_050859_0_1_5"/>
<dbReference type="UniPathway" id="UPA00034">
    <property type="reaction ID" value="UER00019"/>
</dbReference>
<dbReference type="Proteomes" id="UP000001592">
    <property type="component" value="Chromosome"/>
</dbReference>
<dbReference type="GO" id="GO:0005737">
    <property type="term" value="C:cytoplasm"/>
    <property type="evidence" value="ECO:0007669"/>
    <property type="project" value="UniProtKB-SubCell"/>
</dbReference>
<dbReference type="GO" id="GO:0008666">
    <property type="term" value="F:2,3,4,5-tetrahydropyridine-2,6-dicarboxylate N-succinyltransferase activity"/>
    <property type="evidence" value="ECO:0007669"/>
    <property type="project" value="UniProtKB-UniRule"/>
</dbReference>
<dbReference type="GO" id="GO:0016779">
    <property type="term" value="F:nucleotidyltransferase activity"/>
    <property type="evidence" value="ECO:0007669"/>
    <property type="project" value="TreeGrafter"/>
</dbReference>
<dbReference type="GO" id="GO:0019877">
    <property type="term" value="P:diaminopimelate biosynthetic process"/>
    <property type="evidence" value="ECO:0007669"/>
    <property type="project" value="UniProtKB-UniRule"/>
</dbReference>
<dbReference type="GO" id="GO:0009089">
    <property type="term" value="P:lysine biosynthetic process via diaminopimelate"/>
    <property type="evidence" value="ECO:0007669"/>
    <property type="project" value="UniProtKB-UniRule"/>
</dbReference>
<dbReference type="CDD" id="cd03350">
    <property type="entry name" value="LbH_THP_succinylT"/>
    <property type="match status" value="1"/>
</dbReference>
<dbReference type="Gene3D" id="2.160.10.10">
    <property type="entry name" value="Hexapeptide repeat proteins"/>
    <property type="match status" value="1"/>
</dbReference>
<dbReference type="Gene3D" id="1.10.166.10">
    <property type="entry name" value="Tetrahydrodipicolinate-N-succinyltransferase, N-terminal domain"/>
    <property type="match status" value="1"/>
</dbReference>
<dbReference type="HAMAP" id="MF_00811">
    <property type="entry name" value="DapD"/>
    <property type="match status" value="1"/>
</dbReference>
<dbReference type="InterPro" id="IPR005664">
    <property type="entry name" value="DapD_Trfase_Hexpep_rpt_fam"/>
</dbReference>
<dbReference type="InterPro" id="IPR001451">
    <property type="entry name" value="Hexapep"/>
</dbReference>
<dbReference type="InterPro" id="IPR023180">
    <property type="entry name" value="THP_succinylTrfase_dom1"/>
</dbReference>
<dbReference type="InterPro" id="IPR037133">
    <property type="entry name" value="THP_succinylTrfase_N_sf"/>
</dbReference>
<dbReference type="InterPro" id="IPR011004">
    <property type="entry name" value="Trimer_LpxA-like_sf"/>
</dbReference>
<dbReference type="NCBIfam" id="TIGR00965">
    <property type="entry name" value="dapD"/>
    <property type="match status" value="1"/>
</dbReference>
<dbReference type="NCBIfam" id="NF008808">
    <property type="entry name" value="PRK11830.1"/>
    <property type="match status" value="1"/>
</dbReference>
<dbReference type="PANTHER" id="PTHR19136:SF52">
    <property type="entry name" value="2,3,4,5-TETRAHYDROPYRIDINE-2,6-DICARBOXYLATE N-SUCCINYLTRANSFERASE"/>
    <property type="match status" value="1"/>
</dbReference>
<dbReference type="PANTHER" id="PTHR19136">
    <property type="entry name" value="MOLYBDENUM COFACTOR GUANYLYLTRANSFERASE"/>
    <property type="match status" value="1"/>
</dbReference>
<dbReference type="Pfam" id="PF14602">
    <property type="entry name" value="Hexapep_2"/>
    <property type="match status" value="1"/>
</dbReference>
<dbReference type="Pfam" id="PF14805">
    <property type="entry name" value="THDPS_N_2"/>
    <property type="match status" value="1"/>
</dbReference>
<dbReference type="SUPFAM" id="SSF51161">
    <property type="entry name" value="Trimeric LpxA-like enzymes"/>
    <property type="match status" value="1"/>
</dbReference>
<reference key="1">
    <citation type="journal article" date="2007" name="Nat. Genet.">
        <title>Genomic analysis of Bartonella identifies type IV secretion systems as host adaptability factors.</title>
        <authorList>
            <person name="Saenz H.L."/>
            <person name="Engel P."/>
            <person name="Stoeckli M.C."/>
            <person name="Lanz C."/>
            <person name="Raddatz G."/>
            <person name="Vayssier-Taussat M."/>
            <person name="Birtles R."/>
            <person name="Schuster S.C."/>
            <person name="Dehio C."/>
        </authorList>
    </citation>
    <scope>NUCLEOTIDE SEQUENCE [LARGE SCALE GENOMIC DNA]</scope>
    <source>
        <strain>CIP 105476 / IBS 506</strain>
    </source>
</reference>
<protein>
    <recommendedName>
        <fullName evidence="1">2,3,4,5-tetrahydropyridine-2,6-dicarboxylate N-succinyltransferase</fullName>
        <ecNumber evidence="1">2.3.1.117</ecNumber>
    </recommendedName>
    <alternativeName>
        <fullName evidence="1">Tetrahydrodipicolinate N-succinyltransferase</fullName>
        <shortName evidence="1">THDP succinyltransferase</shortName>
        <shortName evidence="1">THP succinyltransferase</shortName>
        <shortName evidence="1">Tetrahydropicolinate succinylase</shortName>
    </alternativeName>
</protein>
<comment type="catalytic activity">
    <reaction evidence="1">
        <text>(S)-2,3,4,5-tetrahydrodipicolinate + succinyl-CoA + H2O = (S)-2-succinylamino-6-oxoheptanedioate + CoA</text>
        <dbReference type="Rhea" id="RHEA:17325"/>
        <dbReference type="ChEBI" id="CHEBI:15377"/>
        <dbReference type="ChEBI" id="CHEBI:15685"/>
        <dbReference type="ChEBI" id="CHEBI:16845"/>
        <dbReference type="ChEBI" id="CHEBI:57287"/>
        <dbReference type="ChEBI" id="CHEBI:57292"/>
        <dbReference type="EC" id="2.3.1.117"/>
    </reaction>
</comment>
<comment type="pathway">
    <text evidence="1">Amino-acid biosynthesis; L-lysine biosynthesis via DAP pathway; LL-2,6-diaminopimelate from (S)-tetrahydrodipicolinate (succinylase route): step 1/3.</text>
</comment>
<comment type="subunit">
    <text evidence="1">Homotrimer.</text>
</comment>
<comment type="subcellular location">
    <subcellularLocation>
        <location evidence="1">Cytoplasm</location>
    </subcellularLocation>
</comment>
<comment type="similarity">
    <text evidence="1">Belongs to the transferase hexapeptide repeat family.</text>
</comment>
<sequence length="286" mass="31376">MTHLTQLEIIIEKAFDDRDSINTTTKGEIRESVEHTLSLLDKGEIRVAERQKNGQWYVHQWLKKAVLLSFRLNPMQIITGGINGTHWWDKVPSKFSGWKEDDFQKAGFRSVPGAIVRHSAYVAPNVILMPSFINLGAFVDEGTMVDTWTTVGSCAQIGKHVHLSGGVGIGGVLEPLQANPTIIEDHCFIGARSEVVEGCIIREGAVLGMGVFIGQSTKIIDRTTGEIFIGEVPAYSVVVPGSLPGKPLPNGEAGPNLYCAVIVKRVDQKTREKTSINELLRDETQC</sequence>
<accession>A9ILJ3</accession>
<evidence type="ECO:0000255" key="1">
    <source>
        <dbReference type="HAMAP-Rule" id="MF_00811"/>
    </source>
</evidence>
<feature type="chain" id="PRO_1000083745" description="2,3,4,5-tetrahydropyridine-2,6-dicarboxylate N-succinyltransferase">
    <location>
        <begin position="1"/>
        <end position="286"/>
    </location>
</feature>
<feature type="binding site" evidence="1">
    <location>
        <position position="109"/>
    </location>
    <ligand>
        <name>substrate</name>
    </ligand>
</feature>
<feature type="binding site" evidence="1">
    <location>
        <position position="146"/>
    </location>
    <ligand>
        <name>substrate</name>
    </ligand>
</feature>
<keyword id="KW-0012">Acyltransferase</keyword>
<keyword id="KW-0028">Amino-acid biosynthesis</keyword>
<keyword id="KW-0963">Cytoplasm</keyword>
<keyword id="KW-0220">Diaminopimelate biosynthesis</keyword>
<keyword id="KW-0457">Lysine biosynthesis</keyword>
<keyword id="KW-0677">Repeat</keyword>
<keyword id="KW-0808">Transferase</keyword>
<name>DAPD_BART1</name>
<gene>
    <name evidence="1" type="primary">dapD</name>
    <name type="ordered locus">BT_0075</name>
</gene>
<organism>
    <name type="scientific">Bartonella tribocorum (strain CIP 105476 / IBS 506)</name>
    <dbReference type="NCBI Taxonomy" id="382640"/>
    <lineage>
        <taxon>Bacteria</taxon>
        <taxon>Pseudomonadati</taxon>
        <taxon>Pseudomonadota</taxon>
        <taxon>Alphaproteobacteria</taxon>
        <taxon>Hyphomicrobiales</taxon>
        <taxon>Bartonellaceae</taxon>
        <taxon>Bartonella</taxon>
    </lineage>
</organism>